<keyword id="KW-0963">Cytoplasm</keyword>
<keyword id="KW-0342">GTP-binding</keyword>
<keyword id="KW-0436">Ligase</keyword>
<keyword id="KW-0460">Magnesium</keyword>
<keyword id="KW-0479">Metal-binding</keyword>
<keyword id="KW-0547">Nucleotide-binding</keyword>
<keyword id="KW-0658">Purine biosynthesis</keyword>
<accession>B6J734</accession>
<gene>
    <name evidence="1" type="primary">purA</name>
    <name type="ordered locus">CbuK_0844</name>
</gene>
<organism>
    <name type="scientific">Coxiella burnetii (strain CbuK_Q154)</name>
    <name type="common">Coxiella burnetii (strain Q154)</name>
    <dbReference type="NCBI Taxonomy" id="434924"/>
    <lineage>
        <taxon>Bacteria</taxon>
        <taxon>Pseudomonadati</taxon>
        <taxon>Pseudomonadota</taxon>
        <taxon>Gammaproteobacteria</taxon>
        <taxon>Legionellales</taxon>
        <taxon>Coxiellaceae</taxon>
        <taxon>Coxiella</taxon>
    </lineage>
</organism>
<sequence length="435" mass="48017">MNIVILGTQWGDEGKGKIVDMLTEDVAAVVRFQGGHNAGHTLIIDGEKTILRLIPSGILREGVLCLIGNGVVLSPPALMEEIEELNAKGIPVTERLRISSACNLLLPYHVALDKAREAELGTKAIGTTGRGIGPAYEDKVARRGIRAMDLLHPDQLLEKIKKATAYHNIQLEHYYHQTPLDYQSIYNQLMEFREKIKPMIGDVSALLGNLRRQNKHIIFEGAQGSLLDIDLGTYPYVTSSNTTAGSAATGSGFGPLYFDRVLGITKAYVTRVGAGPFPTELTNEEGKKMAKRGNEFGSVTGRPRRCGWFDVISMRRTIQINSLTGIVLTKLDVLDEFAKIHLCTAYRCDGEVVNEPPFDQSLLESCEPVYEEMPGWQTSTYGLTDYSEMPKEARNYISRLEELLGVPITIISTGPDRKHTIVRQAVFNQVITAKG</sequence>
<reference key="1">
    <citation type="journal article" date="2009" name="Infect. Immun.">
        <title>Comparative genomics reveal extensive transposon-mediated genomic plasticity and diversity among potential effector proteins within the genus Coxiella.</title>
        <authorList>
            <person name="Beare P.A."/>
            <person name="Unsworth N."/>
            <person name="Andoh M."/>
            <person name="Voth D.E."/>
            <person name="Omsland A."/>
            <person name="Gilk S.D."/>
            <person name="Williams K.P."/>
            <person name="Sobral B.W."/>
            <person name="Kupko J.J. III"/>
            <person name="Porcella S.F."/>
            <person name="Samuel J.E."/>
            <person name="Heinzen R.A."/>
        </authorList>
    </citation>
    <scope>NUCLEOTIDE SEQUENCE [LARGE SCALE GENOMIC DNA]</scope>
    <source>
        <strain>CbuK_Q154</strain>
    </source>
</reference>
<feature type="chain" id="PRO_1000089283" description="Adenylosuccinate synthetase">
    <location>
        <begin position="1"/>
        <end position="435"/>
    </location>
</feature>
<feature type="active site" description="Proton acceptor" evidence="1">
    <location>
        <position position="12"/>
    </location>
</feature>
<feature type="active site" description="Proton donor" evidence="1">
    <location>
        <position position="40"/>
    </location>
</feature>
<feature type="binding site" evidence="1">
    <location>
        <begin position="11"/>
        <end position="17"/>
    </location>
    <ligand>
        <name>GTP</name>
        <dbReference type="ChEBI" id="CHEBI:37565"/>
    </ligand>
</feature>
<feature type="binding site" description="in other chain" evidence="1">
    <location>
        <begin position="12"/>
        <end position="15"/>
    </location>
    <ligand>
        <name>IMP</name>
        <dbReference type="ChEBI" id="CHEBI:58053"/>
        <note>ligand shared between dimeric partners</note>
    </ligand>
</feature>
<feature type="binding site" evidence="1">
    <location>
        <position position="12"/>
    </location>
    <ligand>
        <name>Mg(2+)</name>
        <dbReference type="ChEBI" id="CHEBI:18420"/>
    </ligand>
</feature>
<feature type="binding site" description="in other chain" evidence="1">
    <location>
        <begin position="37"/>
        <end position="40"/>
    </location>
    <ligand>
        <name>IMP</name>
        <dbReference type="ChEBI" id="CHEBI:58053"/>
        <note>ligand shared between dimeric partners</note>
    </ligand>
</feature>
<feature type="binding site" evidence="1">
    <location>
        <begin position="39"/>
        <end position="41"/>
    </location>
    <ligand>
        <name>GTP</name>
        <dbReference type="ChEBI" id="CHEBI:37565"/>
    </ligand>
</feature>
<feature type="binding site" evidence="1">
    <location>
        <position position="39"/>
    </location>
    <ligand>
        <name>Mg(2+)</name>
        <dbReference type="ChEBI" id="CHEBI:18420"/>
    </ligand>
</feature>
<feature type="binding site" description="in other chain" evidence="1">
    <location>
        <position position="128"/>
    </location>
    <ligand>
        <name>IMP</name>
        <dbReference type="ChEBI" id="CHEBI:58053"/>
        <note>ligand shared between dimeric partners</note>
    </ligand>
</feature>
<feature type="binding site" evidence="1">
    <location>
        <position position="142"/>
    </location>
    <ligand>
        <name>IMP</name>
        <dbReference type="ChEBI" id="CHEBI:58053"/>
        <note>ligand shared between dimeric partners</note>
    </ligand>
</feature>
<feature type="binding site" description="in other chain" evidence="1">
    <location>
        <position position="223"/>
    </location>
    <ligand>
        <name>IMP</name>
        <dbReference type="ChEBI" id="CHEBI:58053"/>
        <note>ligand shared between dimeric partners</note>
    </ligand>
</feature>
<feature type="binding site" description="in other chain" evidence="1">
    <location>
        <position position="238"/>
    </location>
    <ligand>
        <name>IMP</name>
        <dbReference type="ChEBI" id="CHEBI:58053"/>
        <note>ligand shared between dimeric partners</note>
    </ligand>
</feature>
<feature type="binding site" evidence="1">
    <location>
        <begin position="298"/>
        <end position="304"/>
    </location>
    <ligand>
        <name>substrate</name>
    </ligand>
</feature>
<feature type="binding site" description="in other chain" evidence="1">
    <location>
        <position position="302"/>
    </location>
    <ligand>
        <name>IMP</name>
        <dbReference type="ChEBI" id="CHEBI:58053"/>
        <note>ligand shared between dimeric partners</note>
    </ligand>
</feature>
<feature type="binding site" evidence="1">
    <location>
        <position position="304"/>
    </location>
    <ligand>
        <name>GTP</name>
        <dbReference type="ChEBI" id="CHEBI:37565"/>
    </ligand>
</feature>
<feature type="binding site" evidence="1">
    <location>
        <begin position="330"/>
        <end position="332"/>
    </location>
    <ligand>
        <name>GTP</name>
        <dbReference type="ChEBI" id="CHEBI:37565"/>
    </ligand>
</feature>
<feature type="binding site" evidence="1">
    <location>
        <begin position="412"/>
        <end position="414"/>
    </location>
    <ligand>
        <name>GTP</name>
        <dbReference type="ChEBI" id="CHEBI:37565"/>
    </ligand>
</feature>
<proteinExistence type="inferred from homology"/>
<comment type="function">
    <text evidence="1">Plays an important role in the de novo pathway of purine nucleotide biosynthesis. Catalyzes the first committed step in the biosynthesis of AMP from IMP.</text>
</comment>
<comment type="catalytic activity">
    <reaction evidence="1">
        <text>IMP + L-aspartate + GTP = N(6)-(1,2-dicarboxyethyl)-AMP + GDP + phosphate + 2 H(+)</text>
        <dbReference type="Rhea" id="RHEA:15753"/>
        <dbReference type="ChEBI" id="CHEBI:15378"/>
        <dbReference type="ChEBI" id="CHEBI:29991"/>
        <dbReference type="ChEBI" id="CHEBI:37565"/>
        <dbReference type="ChEBI" id="CHEBI:43474"/>
        <dbReference type="ChEBI" id="CHEBI:57567"/>
        <dbReference type="ChEBI" id="CHEBI:58053"/>
        <dbReference type="ChEBI" id="CHEBI:58189"/>
        <dbReference type="EC" id="6.3.4.4"/>
    </reaction>
</comment>
<comment type="cofactor">
    <cofactor evidence="1">
        <name>Mg(2+)</name>
        <dbReference type="ChEBI" id="CHEBI:18420"/>
    </cofactor>
    <text evidence="1">Binds 1 Mg(2+) ion per subunit.</text>
</comment>
<comment type="pathway">
    <text evidence="1">Purine metabolism; AMP biosynthesis via de novo pathway; AMP from IMP: step 1/2.</text>
</comment>
<comment type="subunit">
    <text evidence="1">Homodimer.</text>
</comment>
<comment type="subcellular location">
    <subcellularLocation>
        <location evidence="1">Cytoplasm</location>
    </subcellularLocation>
</comment>
<comment type="similarity">
    <text evidence="1">Belongs to the adenylosuccinate synthetase family.</text>
</comment>
<name>PURA_COXB1</name>
<protein>
    <recommendedName>
        <fullName evidence="1">Adenylosuccinate synthetase</fullName>
        <shortName evidence="1">AMPSase</shortName>
        <shortName evidence="1">AdSS</shortName>
        <ecNumber evidence="1">6.3.4.4</ecNumber>
    </recommendedName>
    <alternativeName>
        <fullName evidence="1">IMP--aspartate ligase</fullName>
    </alternativeName>
</protein>
<dbReference type="EC" id="6.3.4.4" evidence="1"/>
<dbReference type="EMBL" id="CP001020">
    <property type="protein sequence ID" value="ACJ20083.1"/>
    <property type="molecule type" value="Genomic_DNA"/>
</dbReference>
<dbReference type="RefSeq" id="WP_005768588.1">
    <property type="nucleotide sequence ID" value="NC_011528.1"/>
</dbReference>
<dbReference type="SMR" id="B6J734"/>
<dbReference type="KEGG" id="cbc:CbuK_0844"/>
<dbReference type="HOGENOM" id="CLU_029848_0_0_6"/>
<dbReference type="UniPathway" id="UPA00075">
    <property type="reaction ID" value="UER00335"/>
</dbReference>
<dbReference type="GO" id="GO:0005737">
    <property type="term" value="C:cytoplasm"/>
    <property type="evidence" value="ECO:0007669"/>
    <property type="project" value="UniProtKB-SubCell"/>
</dbReference>
<dbReference type="GO" id="GO:0004019">
    <property type="term" value="F:adenylosuccinate synthase activity"/>
    <property type="evidence" value="ECO:0007669"/>
    <property type="project" value="UniProtKB-UniRule"/>
</dbReference>
<dbReference type="GO" id="GO:0005525">
    <property type="term" value="F:GTP binding"/>
    <property type="evidence" value="ECO:0007669"/>
    <property type="project" value="UniProtKB-UniRule"/>
</dbReference>
<dbReference type="GO" id="GO:0000287">
    <property type="term" value="F:magnesium ion binding"/>
    <property type="evidence" value="ECO:0007669"/>
    <property type="project" value="UniProtKB-UniRule"/>
</dbReference>
<dbReference type="GO" id="GO:0044208">
    <property type="term" value="P:'de novo' AMP biosynthetic process"/>
    <property type="evidence" value="ECO:0007669"/>
    <property type="project" value="UniProtKB-UniRule"/>
</dbReference>
<dbReference type="GO" id="GO:0046040">
    <property type="term" value="P:IMP metabolic process"/>
    <property type="evidence" value="ECO:0007669"/>
    <property type="project" value="TreeGrafter"/>
</dbReference>
<dbReference type="CDD" id="cd03108">
    <property type="entry name" value="AdSS"/>
    <property type="match status" value="1"/>
</dbReference>
<dbReference type="FunFam" id="1.10.300.10:FF:000001">
    <property type="entry name" value="Adenylosuccinate synthetase"/>
    <property type="match status" value="1"/>
</dbReference>
<dbReference type="FunFam" id="3.90.170.10:FF:000001">
    <property type="entry name" value="Adenylosuccinate synthetase"/>
    <property type="match status" value="1"/>
</dbReference>
<dbReference type="Gene3D" id="3.40.440.10">
    <property type="entry name" value="Adenylosuccinate Synthetase, subunit A, domain 1"/>
    <property type="match status" value="1"/>
</dbReference>
<dbReference type="Gene3D" id="1.10.300.10">
    <property type="entry name" value="Adenylosuccinate Synthetase, subunit A, domain 2"/>
    <property type="match status" value="1"/>
</dbReference>
<dbReference type="Gene3D" id="3.90.170.10">
    <property type="entry name" value="Adenylosuccinate Synthetase, subunit A, domain 3"/>
    <property type="match status" value="1"/>
</dbReference>
<dbReference type="HAMAP" id="MF_00011">
    <property type="entry name" value="Adenylosucc_synth"/>
    <property type="match status" value="1"/>
</dbReference>
<dbReference type="InterPro" id="IPR018220">
    <property type="entry name" value="Adenylosuccin_syn_GTP-bd"/>
</dbReference>
<dbReference type="InterPro" id="IPR033128">
    <property type="entry name" value="Adenylosuccin_syn_Lys_AS"/>
</dbReference>
<dbReference type="InterPro" id="IPR042109">
    <property type="entry name" value="Adenylosuccinate_synth_dom1"/>
</dbReference>
<dbReference type="InterPro" id="IPR042110">
    <property type="entry name" value="Adenylosuccinate_synth_dom2"/>
</dbReference>
<dbReference type="InterPro" id="IPR042111">
    <property type="entry name" value="Adenylosuccinate_synth_dom3"/>
</dbReference>
<dbReference type="InterPro" id="IPR001114">
    <property type="entry name" value="Adenylosuccinate_synthetase"/>
</dbReference>
<dbReference type="InterPro" id="IPR027417">
    <property type="entry name" value="P-loop_NTPase"/>
</dbReference>
<dbReference type="NCBIfam" id="NF002223">
    <property type="entry name" value="PRK01117.1"/>
    <property type="match status" value="1"/>
</dbReference>
<dbReference type="NCBIfam" id="TIGR00184">
    <property type="entry name" value="purA"/>
    <property type="match status" value="1"/>
</dbReference>
<dbReference type="PANTHER" id="PTHR11846">
    <property type="entry name" value="ADENYLOSUCCINATE SYNTHETASE"/>
    <property type="match status" value="1"/>
</dbReference>
<dbReference type="PANTHER" id="PTHR11846:SF0">
    <property type="entry name" value="ADENYLOSUCCINATE SYNTHETASE"/>
    <property type="match status" value="1"/>
</dbReference>
<dbReference type="Pfam" id="PF00709">
    <property type="entry name" value="Adenylsucc_synt"/>
    <property type="match status" value="1"/>
</dbReference>
<dbReference type="SMART" id="SM00788">
    <property type="entry name" value="Adenylsucc_synt"/>
    <property type="match status" value="1"/>
</dbReference>
<dbReference type="SUPFAM" id="SSF52540">
    <property type="entry name" value="P-loop containing nucleoside triphosphate hydrolases"/>
    <property type="match status" value="1"/>
</dbReference>
<dbReference type="PROSITE" id="PS01266">
    <property type="entry name" value="ADENYLOSUCCIN_SYN_1"/>
    <property type="match status" value="1"/>
</dbReference>
<dbReference type="PROSITE" id="PS00513">
    <property type="entry name" value="ADENYLOSUCCIN_SYN_2"/>
    <property type="match status" value="1"/>
</dbReference>
<evidence type="ECO:0000255" key="1">
    <source>
        <dbReference type="HAMAP-Rule" id="MF_00011"/>
    </source>
</evidence>